<name>SYY_SHIB3</name>
<dbReference type="EC" id="6.1.1.1" evidence="1"/>
<dbReference type="EMBL" id="CP001063">
    <property type="protein sequence ID" value="ACD07526.1"/>
    <property type="molecule type" value="Genomic_DNA"/>
</dbReference>
<dbReference type="RefSeq" id="WP_001295400.1">
    <property type="nucleotide sequence ID" value="NC_010658.1"/>
</dbReference>
<dbReference type="SMR" id="B2U2D7"/>
<dbReference type="STRING" id="344609.SbBS512_E1829"/>
<dbReference type="GeneID" id="93775791"/>
<dbReference type="KEGG" id="sbc:SbBS512_E1829"/>
<dbReference type="HOGENOM" id="CLU_024003_0_3_6"/>
<dbReference type="Proteomes" id="UP000001030">
    <property type="component" value="Chromosome"/>
</dbReference>
<dbReference type="GO" id="GO:0005829">
    <property type="term" value="C:cytosol"/>
    <property type="evidence" value="ECO:0007669"/>
    <property type="project" value="TreeGrafter"/>
</dbReference>
<dbReference type="GO" id="GO:0005524">
    <property type="term" value="F:ATP binding"/>
    <property type="evidence" value="ECO:0007669"/>
    <property type="project" value="UniProtKB-UniRule"/>
</dbReference>
<dbReference type="GO" id="GO:0003723">
    <property type="term" value="F:RNA binding"/>
    <property type="evidence" value="ECO:0007669"/>
    <property type="project" value="UniProtKB-KW"/>
</dbReference>
<dbReference type="GO" id="GO:0004831">
    <property type="term" value="F:tyrosine-tRNA ligase activity"/>
    <property type="evidence" value="ECO:0007669"/>
    <property type="project" value="UniProtKB-UniRule"/>
</dbReference>
<dbReference type="GO" id="GO:0006437">
    <property type="term" value="P:tyrosyl-tRNA aminoacylation"/>
    <property type="evidence" value="ECO:0007669"/>
    <property type="project" value="UniProtKB-UniRule"/>
</dbReference>
<dbReference type="CDD" id="cd00165">
    <property type="entry name" value="S4"/>
    <property type="match status" value="1"/>
</dbReference>
<dbReference type="CDD" id="cd00805">
    <property type="entry name" value="TyrRS_core"/>
    <property type="match status" value="1"/>
</dbReference>
<dbReference type="FunFam" id="1.10.240.10:FF:000001">
    <property type="entry name" value="Tyrosine--tRNA ligase"/>
    <property type="match status" value="1"/>
</dbReference>
<dbReference type="FunFam" id="3.10.290.10:FF:000007">
    <property type="entry name" value="Tyrosine--tRNA ligase"/>
    <property type="match status" value="1"/>
</dbReference>
<dbReference type="FunFam" id="3.40.50.620:FF:000008">
    <property type="entry name" value="Tyrosine--tRNA ligase"/>
    <property type="match status" value="1"/>
</dbReference>
<dbReference type="Gene3D" id="3.40.50.620">
    <property type="entry name" value="HUPs"/>
    <property type="match status" value="1"/>
</dbReference>
<dbReference type="Gene3D" id="3.10.290.10">
    <property type="entry name" value="RNA-binding S4 domain"/>
    <property type="match status" value="1"/>
</dbReference>
<dbReference type="Gene3D" id="1.10.240.10">
    <property type="entry name" value="Tyrosyl-Transfer RNA Synthetase"/>
    <property type="match status" value="1"/>
</dbReference>
<dbReference type="HAMAP" id="MF_02006">
    <property type="entry name" value="Tyr_tRNA_synth_type1"/>
    <property type="match status" value="1"/>
</dbReference>
<dbReference type="InterPro" id="IPR001412">
    <property type="entry name" value="aa-tRNA-synth_I_CS"/>
</dbReference>
<dbReference type="InterPro" id="IPR002305">
    <property type="entry name" value="aa-tRNA-synth_Ic"/>
</dbReference>
<dbReference type="InterPro" id="IPR014729">
    <property type="entry name" value="Rossmann-like_a/b/a_fold"/>
</dbReference>
<dbReference type="InterPro" id="IPR002942">
    <property type="entry name" value="S4_RNA-bd"/>
</dbReference>
<dbReference type="InterPro" id="IPR036986">
    <property type="entry name" value="S4_RNA-bd_sf"/>
</dbReference>
<dbReference type="InterPro" id="IPR054608">
    <property type="entry name" value="SYY-like_C"/>
</dbReference>
<dbReference type="InterPro" id="IPR002307">
    <property type="entry name" value="Tyr-tRNA-ligase"/>
</dbReference>
<dbReference type="InterPro" id="IPR024088">
    <property type="entry name" value="Tyr-tRNA-ligase_bac-type"/>
</dbReference>
<dbReference type="InterPro" id="IPR024107">
    <property type="entry name" value="Tyr-tRNA-ligase_bac_1"/>
</dbReference>
<dbReference type="NCBIfam" id="TIGR00234">
    <property type="entry name" value="tyrS"/>
    <property type="match status" value="1"/>
</dbReference>
<dbReference type="PANTHER" id="PTHR11766:SF0">
    <property type="entry name" value="TYROSINE--TRNA LIGASE, MITOCHONDRIAL"/>
    <property type="match status" value="1"/>
</dbReference>
<dbReference type="PANTHER" id="PTHR11766">
    <property type="entry name" value="TYROSYL-TRNA SYNTHETASE"/>
    <property type="match status" value="1"/>
</dbReference>
<dbReference type="Pfam" id="PF22421">
    <property type="entry name" value="SYY_C-terminal"/>
    <property type="match status" value="1"/>
</dbReference>
<dbReference type="Pfam" id="PF00579">
    <property type="entry name" value="tRNA-synt_1b"/>
    <property type="match status" value="1"/>
</dbReference>
<dbReference type="PRINTS" id="PR01040">
    <property type="entry name" value="TRNASYNTHTYR"/>
</dbReference>
<dbReference type="SMART" id="SM00363">
    <property type="entry name" value="S4"/>
    <property type="match status" value="1"/>
</dbReference>
<dbReference type="SUPFAM" id="SSF55174">
    <property type="entry name" value="Alpha-L RNA-binding motif"/>
    <property type="match status" value="1"/>
</dbReference>
<dbReference type="SUPFAM" id="SSF52374">
    <property type="entry name" value="Nucleotidylyl transferase"/>
    <property type="match status" value="1"/>
</dbReference>
<dbReference type="PROSITE" id="PS00178">
    <property type="entry name" value="AA_TRNA_LIGASE_I"/>
    <property type="match status" value="1"/>
</dbReference>
<dbReference type="PROSITE" id="PS50889">
    <property type="entry name" value="S4"/>
    <property type="match status" value="1"/>
</dbReference>
<gene>
    <name evidence="1" type="primary">tyrS</name>
    <name type="ordered locus">SbBS512_E1829</name>
</gene>
<protein>
    <recommendedName>
        <fullName evidence="1">Tyrosine--tRNA ligase</fullName>
        <ecNumber evidence="1">6.1.1.1</ecNumber>
    </recommendedName>
    <alternativeName>
        <fullName evidence="1">Tyrosyl-tRNA synthetase</fullName>
        <shortName evidence="1">TyrRS</shortName>
    </alternativeName>
</protein>
<proteinExistence type="inferred from homology"/>
<sequence>MASSNLIKQLQERGLVAQVTDEEALAERLAQGPIALYCGFDPTADSLHLGHLVPLLCLKRFQQAGHKPVALVGGATGLIGDPSFKAAERKLNTEETVQEWVDKIRKQVAPFLDFDCGENSAIAANNYDWFGNMNVLTFLRDIGKHFSVNQMINKEAVKQRLNREDQGISFTEFSYNLLQGYDFACLNKQYGVVLQIGGSDQWGNITSGIDLTRRLHQNQVFGLTVPLITKADGTKFGKTEGGAVWLDPKKTSPYKFYQFWINTADADVYRFLKFFTFMSIEEINALEEEDKNSGKAPRAQYVLAEQVTRLVHGEEGLQAAKRITECLFSGSLSALSEADFEQLAQDGVPMVEMEKGADLMQALVDSELQPSRGQARKTIASNAITINGEKQSDPEYFFKEEDRLFGRFTLLRRGKKNYCLICWK</sequence>
<comment type="function">
    <text evidence="1">Catalyzes the attachment of tyrosine to tRNA(Tyr) in a two-step reaction: tyrosine is first activated by ATP to form Tyr-AMP and then transferred to the acceptor end of tRNA(Tyr).</text>
</comment>
<comment type="catalytic activity">
    <reaction evidence="1">
        <text>tRNA(Tyr) + L-tyrosine + ATP = L-tyrosyl-tRNA(Tyr) + AMP + diphosphate + H(+)</text>
        <dbReference type="Rhea" id="RHEA:10220"/>
        <dbReference type="Rhea" id="RHEA-COMP:9706"/>
        <dbReference type="Rhea" id="RHEA-COMP:9707"/>
        <dbReference type="ChEBI" id="CHEBI:15378"/>
        <dbReference type="ChEBI" id="CHEBI:30616"/>
        <dbReference type="ChEBI" id="CHEBI:33019"/>
        <dbReference type="ChEBI" id="CHEBI:58315"/>
        <dbReference type="ChEBI" id="CHEBI:78442"/>
        <dbReference type="ChEBI" id="CHEBI:78536"/>
        <dbReference type="ChEBI" id="CHEBI:456215"/>
        <dbReference type="EC" id="6.1.1.1"/>
    </reaction>
</comment>
<comment type="subunit">
    <text evidence="1">Homodimer.</text>
</comment>
<comment type="subcellular location">
    <subcellularLocation>
        <location evidence="1">Cytoplasm</location>
    </subcellularLocation>
</comment>
<comment type="similarity">
    <text evidence="1">Belongs to the class-I aminoacyl-tRNA synthetase family. TyrS type 1 subfamily.</text>
</comment>
<reference key="1">
    <citation type="submission" date="2008-05" db="EMBL/GenBank/DDBJ databases">
        <title>Complete sequence of Shigella boydii serotype 18 strain BS512.</title>
        <authorList>
            <person name="Rasko D.A."/>
            <person name="Rosovitz M."/>
            <person name="Maurelli A.T."/>
            <person name="Myers G."/>
            <person name="Seshadri R."/>
            <person name="Cer R."/>
            <person name="Jiang L."/>
            <person name="Ravel J."/>
            <person name="Sebastian Y."/>
        </authorList>
    </citation>
    <scope>NUCLEOTIDE SEQUENCE [LARGE SCALE GENOMIC DNA]</scope>
    <source>
        <strain>CDC 3083-94 / BS512</strain>
    </source>
</reference>
<organism>
    <name type="scientific">Shigella boydii serotype 18 (strain CDC 3083-94 / BS512)</name>
    <dbReference type="NCBI Taxonomy" id="344609"/>
    <lineage>
        <taxon>Bacteria</taxon>
        <taxon>Pseudomonadati</taxon>
        <taxon>Pseudomonadota</taxon>
        <taxon>Gammaproteobacteria</taxon>
        <taxon>Enterobacterales</taxon>
        <taxon>Enterobacteriaceae</taxon>
        <taxon>Shigella</taxon>
    </lineage>
</organism>
<feature type="chain" id="PRO_1000189330" description="Tyrosine--tRNA ligase">
    <location>
        <begin position="1"/>
        <end position="424"/>
    </location>
</feature>
<feature type="domain" description="S4 RNA-binding" evidence="1">
    <location>
        <begin position="357"/>
        <end position="414"/>
    </location>
</feature>
<feature type="short sequence motif" description="'HIGH' region">
    <location>
        <begin position="42"/>
        <end position="51"/>
    </location>
</feature>
<feature type="short sequence motif" description="'KMSKS' region">
    <location>
        <begin position="235"/>
        <end position="239"/>
    </location>
</feature>
<feature type="binding site" evidence="1">
    <location>
        <position position="37"/>
    </location>
    <ligand>
        <name>L-tyrosine</name>
        <dbReference type="ChEBI" id="CHEBI:58315"/>
    </ligand>
</feature>
<feature type="binding site" evidence="1">
    <location>
        <position position="175"/>
    </location>
    <ligand>
        <name>L-tyrosine</name>
        <dbReference type="ChEBI" id="CHEBI:58315"/>
    </ligand>
</feature>
<feature type="binding site" evidence="1">
    <location>
        <position position="179"/>
    </location>
    <ligand>
        <name>L-tyrosine</name>
        <dbReference type="ChEBI" id="CHEBI:58315"/>
    </ligand>
</feature>
<feature type="binding site" evidence="1">
    <location>
        <position position="238"/>
    </location>
    <ligand>
        <name>ATP</name>
        <dbReference type="ChEBI" id="CHEBI:30616"/>
    </ligand>
</feature>
<feature type="modified residue" description="N6-acetyllysine" evidence="1">
    <location>
        <position position="144"/>
    </location>
</feature>
<evidence type="ECO:0000255" key="1">
    <source>
        <dbReference type="HAMAP-Rule" id="MF_02006"/>
    </source>
</evidence>
<keyword id="KW-0007">Acetylation</keyword>
<keyword id="KW-0030">Aminoacyl-tRNA synthetase</keyword>
<keyword id="KW-0067">ATP-binding</keyword>
<keyword id="KW-0963">Cytoplasm</keyword>
<keyword id="KW-0436">Ligase</keyword>
<keyword id="KW-0547">Nucleotide-binding</keyword>
<keyword id="KW-0648">Protein biosynthesis</keyword>
<keyword id="KW-1185">Reference proteome</keyword>
<keyword id="KW-0694">RNA-binding</keyword>
<accession>B2U2D7</accession>